<proteinExistence type="inferred from homology"/>
<feature type="chain" id="PRO_1000013503" description="UPF0173 metal-dependent hydrolase GTNG_2675">
    <location>
        <begin position="1"/>
        <end position="226"/>
    </location>
</feature>
<dbReference type="EMBL" id="CP000557">
    <property type="protein sequence ID" value="ABO68020.1"/>
    <property type="molecule type" value="Genomic_DNA"/>
</dbReference>
<dbReference type="RefSeq" id="WP_008880872.1">
    <property type="nucleotide sequence ID" value="NC_009328.1"/>
</dbReference>
<dbReference type="SMR" id="A4IRR6"/>
<dbReference type="GeneID" id="87623181"/>
<dbReference type="KEGG" id="gtn:GTNG_2675"/>
<dbReference type="eggNOG" id="COG2220">
    <property type="taxonomic scope" value="Bacteria"/>
</dbReference>
<dbReference type="HOGENOM" id="CLU_070010_4_1_9"/>
<dbReference type="Proteomes" id="UP000001578">
    <property type="component" value="Chromosome"/>
</dbReference>
<dbReference type="GO" id="GO:0016787">
    <property type="term" value="F:hydrolase activity"/>
    <property type="evidence" value="ECO:0007669"/>
    <property type="project" value="UniProtKB-UniRule"/>
</dbReference>
<dbReference type="Gene3D" id="3.60.15.10">
    <property type="entry name" value="Ribonuclease Z/Hydroxyacylglutathione hydrolase-like"/>
    <property type="match status" value="1"/>
</dbReference>
<dbReference type="HAMAP" id="MF_00457">
    <property type="entry name" value="UPF0173"/>
    <property type="match status" value="1"/>
</dbReference>
<dbReference type="InterPro" id="IPR001279">
    <property type="entry name" value="Metallo-B-lactamas"/>
</dbReference>
<dbReference type="InterPro" id="IPR036866">
    <property type="entry name" value="RibonucZ/Hydroxyglut_hydro"/>
</dbReference>
<dbReference type="InterPro" id="IPR022877">
    <property type="entry name" value="UPF0173"/>
</dbReference>
<dbReference type="InterPro" id="IPR050114">
    <property type="entry name" value="UPF0173_UPF0282_UlaG_hydrolase"/>
</dbReference>
<dbReference type="NCBIfam" id="NF001911">
    <property type="entry name" value="PRK00685.1"/>
    <property type="match status" value="1"/>
</dbReference>
<dbReference type="PANTHER" id="PTHR43546:SF3">
    <property type="entry name" value="UPF0173 METAL-DEPENDENT HYDROLASE MJ1163"/>
    <property type="match status" value="1"/>
</dbReference>
<dbReference type="PANTHER" id="PTHR43546">
    <property type="entry name" value="UPF0173 METAL-DEPENDENT HYDROLASE MJ1163-RELATED"/>
    <property type="match status" value="1"/>
</dbReference>
<dbReference type="Pfam" id="PF13483">
    <property type="entry name" value="Lactamase_B_3"/>
    <property type="match status" value="1"/>
</dbReference>
<dbReference type="SMART" id="SM00849">
    <property type="entry name" value="Lactamase_B"/>
    <property type="match status" value="1"/>
</dbReference>
<dbReference type="SUPFAM" id="SSF56281">
    <property type="entry name" value="Metallo-hydrolase/oxidoreductase"/>
    <property type="match status" value="1"/>
</dbReference>
<keyword id="KW-0378">Hydrolase</keyword>
<gene>
    <name type="ordered locus">GTNG_2675</name>
</gene>
<organism>
    <name type="scientific">Geobacillus thermodenitrificans (strain NG80-2)</name>
    <dbReference type="NCBI Taxonomy" id="420246"/>
    <lineage>
        <taxon>Bacteria</taxon>
        <taxon>Bacillati</taxon>
        <taxon>Bacillota</taxon>
        <taxon>Bacilli</taxon>
        <taxon>Bacillales</taxon>
        <taxon>Anoxybacillaceae</taxon>
        <taxon>Geobacillus</taxon>
    </lineage>
</organism>
<protein>
    <recommendedName>
        <fullName evidence="1">UPF0173 metal-dependent hydrolase GTNG_2675</fullName>
    </recommendedName>
</protein>
<accession>A4IRR6</accession>
<comment type="similarity">
    <text evidence="1">Belongs to the UPF0173 family.</text>
</comment>
<reference key="1">
    <citation type="journal article" date="2007" name="Proc. Natl. Acad. Sci. U.S.A.">
        <title>Genome and proteome of long-chain alkane degrading Geobacillus thermodenitrificans NG80-2 isolated from a deep-subsurface oil reservoir.</title>
        <authorList>
            <person name="Feng L."/>
            <person name="Wang W."/>
            <person name="Cheng J."/>
            <person name="Ren Y."/>
            <person name="Zhao G."/>
            <person name="Gao C."/>
            <person name="Tang Y."/>
            <person name="Liu X."/>
            <person name="Han W."/>
            <person name="Peng X."/>
            <person name="Liu R."/>
            <person name="Wang L."/>
        </authorList>
    </citation>
    <scope>NUCLEOTIDE SEQUENCE [LARGE SCALE GENOMIC DNA]</scope>
    <source>
        <strain>NG80-2</strain>
    </source>
</reference>
<sequence length="226" mass="24388">MKISYHGHSVVRIETNGKTILIDPFITGNTTTDLNAADVKADVILLTHGHGDHVGDTVEIAKRNNALVVATFELATYLSWQGVETFGMNIGGAREFDFGTVKFTQAFHSSGFVTEDKQIIYLGMPTGILFTAEGKTIYHAGDTGLFSDMKLIGERHSIDVAFLPIGDSFTMGPEDAAVAAEWLGAKLVVPIHYNTFPPIAQDPQQFVSLLPPGVGRALQPGESIEL</sequence>
<name>Y2675_GEOTN</name>
<evidence type="ECO:0000255" key="1">
    <source>
        <dbReference type="HAMAP-Rule" id="MF_00457"/>
    </source>
</evidence>